<protein>
    <recommendedName>
        <fullName>Histone H2B</fullName>
    </recommendedName>
</protein>
<keyword id="KW-0007">Acetylation</keyword>
<keyword id="KW-0158">Chromosome</keyword>
<keyword id="KW-0238">DNA-binding</keyword>
<keyword id="KW-1017">Isopeptide bond</keyword>
<keyword id="KW-0544">Nucleosome core</keyword>
<keyword id="KW-0539">Nucleus</keyword>
<keyword id="KW-0597">Phosphoprotein</keyword>
<keyword id="KW-1185">Reference proteome</keyword>
<keyword id="KW-0832">Ubl conjugation</keyword>
<accession>P0CO02</accession>
<accession>Q55X48</accession>
<accession>Q5KMT4</accession>
<feature type="initiator methionine" description="Removed" evidence="1">
    <location>
        <position position="1"/>
    </location>
</feature>
<feature type="chain" id="PRO_0000245294" description="Histone H2B">
    <location>
        <begin position="2"/>
        <end position="139"/>
    </location>
</feature>
<feature type="region of interest" description="Disordered" evidence="2">
    <location>
        <begin position="1"/>
        <end position="48"/>
    </location>
</feature>
<feature type="compositionally biased region" description="Low complexity" evidence="2">
    <location>
        <begin position="1"/>
        <end position="37"/>
    </location>
</feature>
<feature type="modified residue" description="N6-acetyllysine; alternate" evidence="1">
    <location>
        <position position="9"/>
    </location>
</feature>
<feature type="modified residue" description="Phosphoserine" evidence="1">
    <location>
        <position position="13"/>
    </location>
</feature>
<feature type="modified residue" description="N6-acetyllysine" evidence="1">
    <location>
        <position position="17"/>
    </location>
</feature>
<feature type="cross-link" description="Glycyl lysine isopeptide (Lys-Gly) (interchain with G-Cter in SUMO); alternate" evidence="1">
    <location>
        <position position="9"/>
    </location>
</feature>
<feature type="cross-link" description="Glycyl lysine isopeptide (Lys-Gly) (interchain with G-Cter in ubiquitin)" evidence="1">
    <location>
        <position position="134"/>
    </location>
</feature>
<evidence type="ECO:0000250" key="1"/>
<evidence type="ECO:0000256" key="2">
    <source>
        <dbReference type="SAM" id="MobiDB-lite"/>
    </source>
</evidence>
<evidence type="ECO:0000305" key="3"/>
<proteinExistence type="inferred from homology"/>
<name>H2B_CRYNJ</name>
<dbReference type="EMBL" id="AE017342">
    <property type="protein sequence ID" value="AAW41759.1"/>
    <property type="molecule type" value="Genomic_DNA"/>
</dbReference>
<dbReference type="RefSeq" id="XP_569066.1">
    <property type="nucleotide sequence ID" value="XM_569066.1"/>
</dbReference>
<dbReference type="SMR" id="P0CO02"/>
<dbReference type="FunCoup" id="P0CO02">
    <property type="interactions" value="175"/>
</dbReference>
<dbReference type="STRING" id="214684.P0CO02"/>
<dbReference type="PaxDb" id="214684-P0CO02"/>
<dbReference type="EnsemblFungi" id="AAW41759">
    <property type="protein sequence ID" value="AAW41759"/>
    <property type="gene ID" value="CNB00560"/>
</dbReference>
<dbReference type="GeneID" id="3255623"/>
<dbReference type="KEGG" id="cne:CNB00560"/>
<dbReference type="VEuPathDB" id="FungiDB:CNB00560"/>
<dbReference type="eggNOG" id="KOG1744">
    <property type="taxonomic scope" value="Eukaryota"/>
</dbReference>
<dbReference type="HOGENOM" id="CLU_075666_2_1_1"/>
<dbReference type="InParanoid" id="P0CO02"/>
<dbReference type="OMA" id="PLVCHIS"/>
<dbReference type="OrthoDB" id="10254238at2759"/>
<dbReference type="Proteomes" id="UP000002149">
    <property type="component" value="Chromosome 2"/>
</dbReference>
<dbReference type="GO" id="GO:0000786">
    <property type="term" value="C:nucleosome"/>
    <property type="evidence" value="ECO:0007669"/>
    <property type="project" value="UniProtKB-KW"/>
</dbReference>
<dbReference type="GO" id="GO:0005634">
    <property type="term" value="C:nucleus"/>
    <property type="evidence" value="ECO:0007669"/>
    <property type="project" value="UniProtKB-SubCell"/>
</dbReference>
<dbReference type="GO" id="GO:0035861">
    <property type="term" value="C:site of double-strand break"/>
    <property type="evidence" value="ECO:0007669"/>
    <property type="project" value="EnsemblFungi"/>
</dbReference>
<dbReference type="GO" id="GO:0003677">
    <property type="term" value="F:DNA binding"/>
    <property type="evidence" value="ECO:0000318"/>
    <property type="project" value="GO_Central"/>
</dbReference>
<dbReference type="GO" id="GO:0046982">
    <property type="term" value="F:protein heterodimerization activity"/>
    <property type="evidence" value="ECO:0007669"/>
    <property type="project" value="InterPro"/>
</dbReference>
<dbReference type="GO" id="GO:0030527">
    <property type="term" value="F:structural constituent of chromatin"/>
    <property type="evidence" value="ECO:0007669"/>
    <property type="project" value="InterPro"/>
</dbReference>
<dbReference type="CDD" id="cd22910">
    <property type="entry name" value="HFD_H2B"/>
    <property type="match status" value="1"/>
</dbReference>
<dbReference type="FunFam" id="1.10.20.10:FF:000014">
    <property type="entry name" value="Histone H2B"/>
    <property type="match status" value="1"/>
</dbReference>
<dbReference type="Gene3D" id="1.10.20.10">
    <property type="entry name" value="Histone, subunit A"/>
    <property type="match status" value="1"/>
</dbReference>
<dbReference type="InterPro" id="IPR009072">
    <property type="entry name" value="Histone-fold"/>
</dbReference>
<dbReference type="InterPro" id="IPR007125">
    <property type="entry name" value="Histone_H2A/H2B/H3"/>
</dbReference>
<dbReference type="InterPro" id="IPR000558">
    <property type="entry name" value="Histone_H2B"/>
</dbReference>
<dbReference type="InterPro" id="IPR055333">
    <property type="entry name" value="HISTONE_H2B_site"/>
</dbReference>
<dbReference type="PANTHER" id="PTHR23428">
    <property type="entry name" value="HISTONE H2B"/>
    <property type="match status" value="1"/>
</dbReference>
<dbReference type="Pfam" id="PF00125">
    <property type="entry name" value="Histone"/>
    <property type="match status" value="1"/>
</dbReference>
<dbReference type="PRINTS" id="PR00621">
    <property type="entry name" value="HISTONEH2B"/>
</dbReference>
<dbReference type="SMART" id="SM00427">
    <property type="entry name" value="H2B"/>
    <property type="match status" value="1"/>
</dbReference>
<dbReference type="SUPFAM" id="SSF47113">
    <property type="entry name" value="Histone-fold"/>
    <property type="match status" value="1"/>
</dbReference>
<dbReference type="PROSITE" id="PS00357">
    <property type="entry name" value="HISTONE_H2B"/>
    <property type="match status" value="1"/>
</dbReference>
<organism>
    <name type="scientific">Cryptococcus neoformans var. neoformans serotype D (strain JEC21 / ATCC MYA-565)</name>
    <name type="common">Filobasidiella neoformans</name>
    <dbReference type="NCBI Taxonomy" id="214684"/>
    <lineage>
        <taxon>Eukaryota</taxon>
        <taxon>Fungi</taxon>
        <taxon>Dikarya</taxon>
        <taxon>Basidiomycota</taxon>
        <taxon>Agaricomycotina</taxon>
        <taxon>Tremellomycetes</taxon>
        <taxon>Tremellales</taxon>
        <taxon>Cryptococcaceae</taxon>
        <taxon>Cryptococcus</taxon>
        <taxon>Cryptococcus neoformans species complex</taxon>
    </lineage>
</organism>
<sequence>MAPKSVASKAPASQASKAPAAASKAPAKAAKTSAAPKDGAKKRSKKRVESYSSYIYKVLKQVHPDTGISNKAMAILNSFVSDIFERIATEASKLASYNHRSTISSREIQTSVRLILPGELSKHAISEGTKAVTKYSSSK</sequence>
<gene>
    <name type="primary">HTB1</name>
    <name type="ordered locus">CNB00560</name>
</gene>
<reference key="1">
    <citation type="journal article" date="2005" name="Science">
        <title>The genome of the basidiomycetous yeast and human pathogen Cryptococcus neoformans.</title>
        <authorList>
            <person name="Loftus B.J."/>
            <person name="Fung E."/>
            <person name="Roncaglia P."/>
            <person name="Rowley D."/>
            <person name="Amedeo P."/>
            <person name="Bruno D."/>
            <person name="Vamathevan J."/>
            <person name="Miranda M."/>
            <person name="Anderson I.J."/>
            <person name="Fraser J.A."/>
            <person name="Allen J.E."/>
            <person name="Bosdet I.E."/>
            <person name="Brent M.R."/>
            <person name="Chiu R."/>
            <person name="Doering T.L."/>
            <person name="Donlin M.J."/>
            <person name="D'Souza C.A."/>
            <person name="Fox D.S."/>
            <person name="Grinberg V."/>
            <person name="Fu J."/>
            <person name="Fukushima M."/>
            <person name="Haas B.J."/>
            <person name="Huang J.C."/>
            <person name="Janbon G."/>
            <person name="Jones S.J.M."/>
            <person name="Koo H.L."/>
            <person name="Krzywinski M.I."/>
            <person name="Kwon-Chung K.J."/>
            <person name="Lengeler K.B."/>
            <person name="Maiti R."/>
            <person name="Marra M.A."/>
            <person name="Marra R.E."/>
            <person name="Mathewson C.A."/>
            <person name="Mitchell T.G."/>
            <person name="Pertea M."/>
            <person name="Riggs F.R."/>
            <person name="Salzberg S.L."/>
            <person name="Schein J.E."/>
            <person name="Shvartsbeyn A."/>
            <person name="Shin H."/>
            <person name="Shumway M."/>
            <person name="Specht C.A."/>
            <person name="Suh B.B."/>
            <person name="Tenney A."/>
            <person name="Utterback T.R."/>
            <person name="Wickes B.L."/>
            <person name="Wortman J.R."/>
            <person name="Wye N.H."/>
            <person name="Kronstad J.W."/>
            <person name="Lodge J.K."/>
            <person name="Heitman J."/>
            <person name="Davis R.W."/>
            <person name="Fraser C.M."/>
            <person name="Hyman R.W."/>
        </authorList>
    </citation>
    <scope>NUCLEOTIDE SEQUENCE [LARGE SCALE GENOMIC DNA]</scope>
    <source>
        <strain>JEC21 / ATCC MYA-565</strain>
    </source>
</reference>
<comment type="function">
    <text>Core component of nucleosome. Nucleosomes wrap and compact DNA into chromatin, limiting DNA accessibility to the cellular machineries which require DNA as a template. Histones thereby play a central role in transcription regulation, DNA repair, DNA replication and chromosomal stability. DNA accessibility is regulated via a complex set of post-translational modifications of histones, also called histone code, and nucleosome remodeling.</text>
</comment>
<comment type="subunit">
    <text>The nucleosome is a histone octamer containing two molecules each of H2A, H2B, H3 and H4 assembled in one H3-H4 heterotetramer and two H2A-H2B heterodimers. The octamer wraps approximately 147 bp of DNA.</text>
</comment>
<comment type="subcellular location">
    <subcellularLocation>
        <location>Nucleus</location>
    </subcellularLocation>
    <subcellularLocation>
        <location>Chromosome</location>
    </subcellularLocation>
</comment>
<comment type="PTM">
    <text evidence="1">Monoubiquitinated by the UBC2-BRE1 complex to form H2BK123ub1. H2BK123ub1 gives a specific tag for epigenetic transcriptional activation and is also prerequisite for H3K4me and H3K79me formation. H2BK123ub1 also modulates the formation of double-strand breaks during meiosis and is a prerequisite for DNA-damage checkpoint activation (By similarity).</text>
</comment>
<comment type="PTM">
    <text evidence="1">Phosphorylated to form H2BS10ph during progression through meiotic prophase. May be correlated with chromosome condensation (By similarity).</text>
</comment>
<comment type="PTM">
    <text evidence="1">Acetylation of N-terminal lysines and particularly formation of H2BK11ac has a positive effect on transcription.</text>
</comment>
<comment type="PTM">
    <text evidence="1">Sumoylation to form H2BK6su occurs preferentially near the telomeres and represses gene transcription.</text>
</comment>
<comment type="similarity">
    <text evidence="3">Belongs to the histone H2B family.</text>
</comment>
<comment type="caution">
    <text evidence="3">To ensure consistency between histone entries, we follow the 'Brno' nomenclature for histone modifications, with positions referring to those used in the literature for the 'closest' model organism. Due to slight variations in histone sequences between organisms and to the presence of initiator methionine in UniProtKB/Swiss-Prot sequences, the actual positions of modified amino acids in the sequence generally differ. In this entry the following conventions are used: H2BK6ac = acetylated Lys-9; H2BK6su = sumoylated Lys-9; H2BS10ph = phosphorylated Ser-13; H2BK11ac = acetylated Lys-17; H2BK123ub1 = monoubiquitinated Lys-134.</text>
</comment>